<accession>B2U2Q0</accession>
<evidence type="ECO:0000255" key="1">
    <source>
        <dbReference type="HAMAP-Rule" id="MF_01852"/>
    </source>
</evidence>
<evidence type="ECO:0000305" key="2"/>
<keyword id="KW-0067">ATP-binding</keyword>
<keyword id="KW-0963">Cytoplasm</keyword>
<keyword id="KW-0547">Nucleotide-binding</keyword>
<keyword id="KW-0548">Nucleotidyltransferase</keyword>
<keyword id="KW-1185">Reference proteome</keyword>
<keyword id="KW-0808">Transferase</keyword>
<keyword id="KW-0819">tRNA processing</keyword>
<proteinExistence type="inferred from homology"/>
<feature type="chain" id="PRO_0000352991" description="Threonylcarbamoyl-AMP synthase">
    <location>
        <begin position="1"/>
        <end position="190"/>
    </location>
</feature>
<feature type="domain" description="YrdC-like" evidence="1">
    <location>
        <begin position="7"/>
        <end position="190"/>
    </location>
</feature>
<gene>
    <name evidence="1" type="primary">tsaC</name>
    <name type="synonym">rimN</name>
    <name type="ordered locus">SbBS512_E3667</name>
</gene>
<sequence>MNNNLQGDAIAAAIDVLNEERVIAYPTEAVFGVGCDPDSETAVMRLLELKQRPVDKGLILIAANYEQLKPYIDDTMLTDAQRETIFSRWPGPVTFVFPAPATTPRWLTGRFDSLAVRVTDHPLVVALCQAYGKPLVSTSANLSGLPPCRTVDEVRAQFGAAFPVVPGETGGRLNPSEIRDALTGELFRQG</sequence>
<name>TSAC_SHIB3</name>
<organism>
    <name type="scientific">Shigella boydii serotype 18 (strain CDC 3083-94 / BS512)</name>
    <dbReference type="NCBI Taxonomy" id="344609"/>
    <lineage>
        <taxon>Bacteria</taxon>
        <taxon>Pseudomonadati</taxon>
        <taxon>Pseudomonadota</taxon>
        <taxon>Gammaproteobacteria</taxon>
        <taxon>Enterobacterales</taxon>
        <taxon>Enterobacteriaceae</taxon>
        <taxon>Shigella</taxon>
    </lineage>
</organism>
<comment type="function">
    <text evidence="1">Required for the formation of a threonylcarbamoyl group on adenosine at position 37 (t(6)A37) in tRNAs that read codons beginning with adenine. Catalyzes the conversion of L-threonine, HCO(3)(-)/CO(2) and ATP to give threonylcarbamoyl-AMP (TC-AMP) as the acyladenylate intermediate, with the release of diphosphate.</text>
</comment>
<comment type="catalytic activity">
    <reaction evidence="1">
        <text>L-threonine + hydrogencarbonate + ATP = L-threonylcarbamoyladenylate + diphosphate + H2O</text>
        <dbReference type="Rhea" id="RHEA:36407"/>
        <dbReference type="ChEBI" id="CHEBI:15377"/>
        <dbReference type="ChEBI" id="CHEBI:17544"/>
        <dbReference type="ChEBI" id="CHEBI:30616"/>
        <dbReference type="ChEBI" id="CHEBI:33019"/>
        <dbReference type="ChEBI" id="CHEBI:57926"/>
        <dbReference type="ChEBI" id="CHEBI:73682"/>
        <dbReference type="EC" id="2.7.7.87"/>
    </reaction>
</comment>
<comment type="subcellular location">
    <subcellularLocation>
        <location evidence="1">Cytoplasm</location>
    </subcellularLocation>
</comment>
<comment type="similarity">
    <text evidence="1">Belongs to the SUA5 family. TsaC subfamily.</text>
</comment>
<comment type="sequence caution" evidence="2">
    <conflict type="erroneous initiation">
        <sequence resource="EMBL-CDS" id="ACD09838"/>
    </conflict>
</comment>
<protein>
    <recommendedName>
        <fullName evidence="1">Threonylcarbamoyl-AMP synthase</fullName>
        <shortName evidence="1">TC-AMP synthase</shortName>
        <ecNumber evidence="1">2.7.7.87</ecNumber>
    </recommendedName>
    <alternativeName>
        <fullName evidence="1">L-threonylcarbamoyladenylate synthase</fullName>
    </alternativeName>
    <alternativeName>
        <fullName evidence="1">t(6)A37 threonylcarbamoyladenosine biosynthesis protein TsaC</fullName>
    </alternativeName>
    <alternativeName>
        <fullName evidence="1">tRNA threonylcarbamoyladenosine biosynthesis protein TsaC</fullName>
    </alternativeName>
</protein>
<dbReference type="EC" id="2.7.7.87" evidence="1"/>
<dbReference type="EMBL" id="CP001063">
    <property type="protein sequence ID" value="ACD09838.1"/>
    <property type="status" value="ALT_INIT"/>
    <property type="molecule type" value="Genomic_DNA"/>
</dbReference>
<dbReference type="RefSeq" id="WP_001297709.1">
    <property type="nucleotide sequence ID" value="NC_010658.1"/>
</dbReference>
<dbReference type="SMR" id="B2U2Q0"/>
<dbReference type="STRING" id="344609.SbBS512_E3667"/>
<dbReference type="GeneID" id="75204135"/>
<dbReference type="KEGG" id="sbc:SbBS512_E3667"/>
<dbReference type="HOGENOM" id="CLU_031397_6_0_6"/>
<dbReference type="Proteomes" id="UP000001030">
    <property type="component" value="Chromosome"/>
</dbReference>
<dbReference type="GO" id="GO:0005737">
    <property type="term" value="C:cytoplasm"/>
    <property type="evidence" value="ECO:0007669"/>
    <property type="project" value="UniProtKB-SubCell"/>
</dbReference>
<dbReference type="GO" id="GO:0005524">
    <property type="term" value="F:ATP binding"/>
    <property type="evidence" value="ECO:0007669"/>
    <property type="project" value="UniProtKB-UniRule"/>
</dbReference>
<dbReference type="GO" id="GO:0003725">
    <property type="term" value="F:double-stranded RNA binding"/>
    <property type="evidence" value="ECO:0007669"/>
    <property type="project" value="InterPro"/>
</dbReference>
<dbReference type="GO" id="GO:0061710">
    <property type="term" value="F:L-threonylcarbamoyladenylate synthase"/>
    <property type="evidence" value="ECO:0007669"/>
    <property type="project" value="UniProtKB-EC"/>
</dbReference>
<dbReference type="GO" id="GO:0000049">
    <property type="term" value="F:tRNA binding"/>
    <property type="evidence" value="ECO:0007669"/>
    <property type="project" value="TreeGrafter"/>
</dbReference>
<dbReference type="GO" id="GO:0006450">
    <property type="term" value="P:regulation of translational fidelity"/>
    <property type="evidence" value="ECO:0007669"/>
    <property type="project" value="TreeGrafter"/>
</dbReference>
<dbReference type="GO" id="GO:0002949">
    <property type="term" value="P:tRNA threonylcarbamoyladenosine modification"/>
    <property type="evidence" value="ECO:0007669"/>
    <property type="project" value="UniProtKB-UniRule"/>
</dbReference>
<dbReference type="FunFam" id="3.90.870.10:FF:000004">
    <property type="entry name" value="Threonylcarbamoyl-AMP synthase"/>
    <property type="match status" value="1"/>
</dbReference>
<dbReference type="Gene3D" id="3.90.870.10">
    <property type="entry name" value="DHBP synthase"/>
    <property type="match status" value="1"/>
</dbReference>
<dbReference type="HAMAP" id="MF_01852">
    <property type="entry name" value="TsaC"/>
    <property type="match status" value="1"/>
</dbReference>
<dbReference type="InterPro" id="IPR017945">
    <property type="entry name" value="DHBP_synth_RibB-like_a/b_dom"/>
</dbReference>
<dbReference type="InterPro" id="IPR006070">
    <property type="entry name" value="Sua5-like_dom"/>
</dbReference>
<dbReference type="InterPro" id="IPR023535">
    <property type="entry name" value="TC-AMP_synthase"/>
</dbReference>
<dbReference type="InterPro" id="IPR050156">
    <property type="entry name" value="TC-AMP_synthase_SUA5"/>
</dbReference>
<dbReference type="NCBIfam" id="NF007919">
    <property type="entry name" value="PRK10634.1"/>
    <property type="match status" value="1"/>
</dbReference>
<dbReference type="PANTHER" id="PTHR17490">
    <property type="entry name" value="SUA5"/>
    <property type="match status" value="1"/>
</dbReference>
<dbReference type="PANTHER" id="PTHR17490:SF18">
    <property type="entry name" value="THREONYLCARBAMOYL-AMP SYNTHASE"/>
    <property type="match status" value="1"/>
</dbReference>
<dbReference type="Pfam" id="PF01300">
    <property type="entry name" value="Sua5_yciO_yrdC"/>
    <property type="match status" value="1"/>
</dbReference>
<dbReference type="SUPFAM" id="SSF55821">
    <property type="entry name" value="YrdC/RibB"/>
    <property type="match status" value="1"/>
</dbReference>
<dbReference type="PROSITE" id="PS51163">
    <property type="entry name" value="YRDC"/>
    <property type="match status" value="1"/>
</dbReference>
<reference key="1">
    <citation type="submission" date="2008-05" db="EMBL/GenBank/DDBJ databases">
        <title>Complete sequence of Shigella boydii serotype 18 strain BS512.</title>
        <authorList>
            <person name="Rasko D.A."/>
            <person name="Rosovitz M."/>
            <person name="Maurelli A.T."/>
            <person name="Myers G."/>
            <person name="Seshadri R."/>
            <person name="Cer R."/>
            <person name="Jiang L."/>
            <person name="Ravel J."/>
            <person name="Sebastian Y."/>
        </authorList>
    </citation>
    <scope>NUCLEOTIDE SEQUENCE [LARGE SCALE GENOMIC DNA]</scope>
    <source>
        <strain>CDC 3083-94 / BS512</strain>
    </source>
</reference>